<dbReference type="EC" id="2.7.7.108" evidence="1"/>
<dbReference type="EMBL" id="L77117">
    <property type="protein sequence ID" value="AAB98423.1"/>
    <property type="molecule type" value="Genomic_DNA"/>
</dbReference>
<dbReference type="RefSeq" id="WP_010869934.1">
    <property type="nucleotide sequence ID" value="NC_000909.1"/>
</dbReference>
<dbReference type="SMR" id="Q57877"/>
<dbReference type="STRING" id="243232.MJ_0435"/>
<dbReference type="PaxDb" id="243232-MJ_0435"/>
<dbReference type="EnsemblBacteria" id="AAB98423">
    <property type="protein sequence ID" value="AAB98423"/>
    <property type="gene ID" value="MJ_0435"/>
</dbReference>
<dbReference type="GeneID" id="1451295"/>
<dbReference type="KEGG" id="mja:MJ_0435"/>
<dbReference type="eggNOG" id="arCOG01206">
    <property type="taxonomic scope" value="Archaea"/>
</dbReference>
<dbReference type="HOGENOM" id="CLU_130257_4_1_2"/>
<dbReference type="InParanoid" id="Q57877"/>
<dbReference type="OrthoDB" id="9287at2157"/>
<dbReference type="PhylomeDB" id="Q57877"/>
<dbReference type="Proteomes" id="UP000000805">
    <property type="component" value="Chromosome"/>
</dbReference>
<dbReference type="GO" id="GO:0005524">
    <property type="term" value="F:ATP binding"/>
    <property type="evidence" value="ECO:0007669"/>
    <property type="project" value="UniProtKB-KW"/>
</dbReference>
<dbReference type="GO" id="GO:0046872">
    <property type="term" value="F:metal ion binding"/>
    <property type="evidence" value="ECO:0007669"/>
    <property type="project" value="UniProtKB-KW"/>
</dbReference>
<dbReference type="GO" id="GO:0016779">
    <property type="term" value="F:nucleotidyltransferase activity"/>
    <property type="evidence" value="ECO:0007669"/>
    <property type="project" value="UniProtKB-KW"/>
</dbReference>
<dbReference type="CDD" id="cd05403">
    <property type="entry name" value="NT_KNTase_like"/>
    <property type="match status" value="1"/>
</dbReference>
<dbReference type="Gene3D" id="3.30.460.10">
    <property type="entry name" value="Beta Polymerase, domain 2"/>
    <property type="match status" value="1"/>
</dbReference>
<dbReference type="InterPro" id="IPR043519">
    <property type="entry name" value="NT_sf"/>
</dbReference>
<dbReference type="InterPro" id="IPR002934">
    <property type="entry name" value="Polymerase_NTP_transf_dom"/>
</dbReference>
<dbReference type="InterPro" id="IPR052038">
    <property type="entry name" value="Type-VII_TA_antitoxin"/>
</dbReference>
<dbReference type="PANTHER" id="PTHR33571:SF14">
    <property type="entry name" value="PROTEIN ADENYLYLTRANSFERASE MJ0435-RELATED"/>
    <property type="match status" value="1"/>
</dbReference>
<dbReference type="PANTHER" id="PTHR33571">
    <property type="entry name" value="SSL8005 PROTEIN"/>
    <property type="match status" value="1"/>
</dbReference>
<dbReference type="Pfam" id="PF01909">
    <property type="entry name" value="NTP_transf_2"/>
    <property type="match status" value="1"/>
</dbReference>
<dbReference type="SUPFAM" id="SSF81301">
    <property type="entry name" value="Nucleotidyltransferase"/>
    <property type="match status" value="1"/>
</dbReference>
<gene>
    <name type="ordered locus">MJ0435</name>
</gene>
<name>Y435_METJA</name>
<proteinExistence type="inferred from homology"/>
<sequence>MNINEIKRKIIPILLKHGVKRASIFGSYARNEQKETSDIDILVEFGEGKSLLDLVRLKYELEEVLGKEVDVLTYNSIHPLLKDRILNEAVDVL</sequence>
<protein>
    <recommendedName>
        <fullName>Putative protein adenylyltransferase MJ0435</fullName>
        <ecNumber evidence="1">2.7.7.108</ecNumber>
    </recommendedName>
    <alternativeName>
        <fullName>Putative antitoxin MJ0435</fullName>
    </alternativeName>
</protein>
<comment type="function">
    <text evidence="2">Probable antitoxin component of a putative type VII toxin-antitoxin (TA) system. Neutralizes cognate toxic MJ0434 by di-AMPylation.</text>
</comment>
<comment type="catalytic activity">
    <reaction evidence="2">
        <text>L-tyrosyl-[protein] + ATP = O-(5'-adenylyl)-L-tyrosyl-[protein] + diphosphate</text>
        <dbReference type="Rhea" id="RHEA:54288"/>
        <dbReference type="Rhea" id="RHEA-COMP:10136"/>
        <dbReference type="Rhea" id="RHEA-COMP:13846"/>
        <dbReference type="ChEBI" id="CHEBI:30616"/>
        <dbReference type="ChEBI" id="CHEBI:33019"/>
        <dbReference type="ChEBI" id="CHEBI:46858"/>
        <dbReference type="ChEBI" id="CHEBI:83624"/>
        <dbReference type="EC" id="2.7.7.108"/>
    </reaction>
</comment>
<comment type="catalytic activity">
    <reaction evidence="2">
        <text>O-(5'-adenylyl)-L-tyrosyl-[protein] + ATP = O-[5'-(adenylyl-(5'-&gt;3')-adenylyl)]-L-tyrosyl-[protein] + diphosphate</text>
        <dbReference type="Rhea" id="RHEA:66528"/>
        <dbReference type="Rhea" id="RHEA-COMP:13846"/>
        <dbReference type="Rhea" id="RHEA-COMP:17046"/>
        <dbReference type="ChEBI" id="CHEBI:30616"/>
        <dbReference type="ChEBI" id="CHEBI:33019"/>
        <dbReference type="ChEBI" id="CHEBI:83624"/>
        <dbReference type="ChEBI" id="CHEBI:167160"/>
    </reaction>
</comment>
<comment type="cofactor">
    <cofactor evidence="2">
        <name>Mg(2+)</name>
        <dbReference type="ChEBI" id="CHEBI:18420"/>
    </cofactor>
    <text evidence="2">Binds 2 Mg(2+) ions.</text>
</comment>
<comment type="subunit">
    <text evidence="2">Probably forms a complex with cognate toxin MJ0434.</text>
</comment>
<comment type="similarity">
    <text evidence="3">Belongs to the MntA antitoxin family.</text>
</comment>
<keyword id="KW-0067">ATP-binding</keyword>
<keyword id="KW-0460">Magnesium</keyword>
<keyword id="KW-0479">Metal-binding</keyword>
<keyword id="KW-0547">Nucleotide-binding</keyword>
<keyword id="KW-0548">Nucleotidyltransferase</keyword>
<keyword id="KW-1185">Reference proteome</keyword>
<keyword id="KW-1277">Toxin-antitoxin system</keyword>
<keyword id="KW-0808">Transferase</keyword>
<feature type="chain" id="PRO_0000106875" description="Putative protein adenylyltransferase MJ0435">
    <location>
        <begin position="1"/>
        <end position="93"/>
    </location>
</feature>
<feature type="short sequence motif" description="GSX(10)DXD motif" evidence="2">
    <location>
        <begin position="26"/>
        <end position="40"/>
    </location>
</feature>
<feature type="binding site" evidence="2">
    <location>
        <position position="38"/>
    </location>
    <ligand>
        <name>Mg(2+)</name>
        <dbReference type="ChEBI" id="CHEBI:18420"/>
        <label>1</label>
    </ligand>
</feature>
<feature type="binding site" evidence="2">
    <location>
        <position position="38"/>
    </location>
    <ligand>
        <name>Mg(2+)</name>
        <dbReference type="ChEBI" id="CHEBI:18420"/>
        <label>2</label>
    </ligand>
</feature>
<feature type="binding site" evidence="2">
    <location>
        <position position="40"/>
    </location>
    <ligand>
        <name>Mg(2+)</name>
        <dbReference type="ChEBI" id="CHEBI:18420"/>
        <label>1</label>
    </ligand>
</feature>
<feature type="binding site" evidence="2">
    <location>
        <position position="40"/>
    </location>
    <ligand>
        <name>Mg(2+)</name>
        <dbReference type="ChEBI" id="CHEBI:18420"/>
        <label>2</label>
    </ligand>
</feature>
<feature type="binding site" evidence="2">
    <location>
        <position position="70"/>
    </location>
    <ligand>
        <name>Mg(2+)</name>
        <dbReference type="ChEBI" id="CHEBI:18420"/>
        <label>1</label>
    </ligand>
</feature>
<evidence type="ECO:0000250" key="1">
    <source>
        <dbReference type="UniProtKB" id="A0A0B0QJN8"/>
    </source>
</evidence>
<evidence type="ECO:0000250" key="2">
    <source>
        <dbReference type="UniProtKB" id="Q8ECH7"/>
    </source>
</evidence>
<evidence type="ECO:0000305" key="3"/>
<organism>
    <name type="scientific">Methanocaldococcus jannaschii (strain ATCC 43067 / DSM 2661 / JAL-1 / JCM 10045 / NBRC 100440)</name>
    <name type="common">Methanococcus jannaschii</name>
    <dbReference type="NCBI Taxonomy" id="243232"/>
    <lineage>
        <taxon>Archaea</taxon>
        <taxon>Methanobacteriati</taxon>
        <taxon>Methanobacteriota</taxon>
        <taxon>Methanomada group</taxon>
        <taxon>Methanococci</taxon>
        <taxon>Methanococcales</taxon>
        <taxon>Methanocaldococcaceae</taxon>
        <taxon>Methanocaldococcus</taxon>
    </lineage>
</organism>
<accession>Q57877</accession>
<reference key="1">
    <citation type="journal article" date="1996" name="Science">
        <title>Complete genome sequence of the methanogenic archaeon, Methanococcus jannaschii.</title>
        <authorList>
            <person name="Bult C.J."/>
            <person name="White O."/>
            <person name="Olsen G.J."/>
            <person name="Zhou L."/>
            <person name="Fleischmann R.D."/>
            <person name="Sutton G.G."/>
            <person name="Blake J.A."/>
            <person name="FitzGerald L.M."/>
            <person name="Clayton R.A."/>
            <person name="Gocayne J.D."/>
            <person name="Kerlavage A.R."/>
            <person name="Dougherty B.A."/>
            <person name="Tomb J.-F."/>
            <person name="Adams M.D."/>
            <person name="Reich C.I."/>
            <person name="Overbeek R."/>
            <person name="Kirkness E.F."/>
            <person name="Weinstock K.G."/>
            <person name="Merrick J.M."/>
            <person name="Glodek A."/>
            <person name="Scott J.L."/>
            <person name="Geoghagen N.S.M."/>
            <person name="Weidman J.F."/>
            <person name="Fuhrmann J.L."/>
            <person name="Nguyen D."/>
            <person name="Utterback T.R."/>
            <person name="Kelley J.M."/>
            <person name="Peterson J.D."/>
            <person name="Sadow P.W."/>
            <person name="Hanna M.C."/>
            <person name="Cotton M.D."/>
            <person name="Roberts K.M."/>
            <person name="Hurst M.A."/>
            <person name="Kaine B.P."/>
            <person name="Borodovsky M."/>
            <person name="Klenk H.-P."/>
            <person name="Fraser C.M."/>
            <person name="Smith H.O."/>
            <person name="Woese C.R."/>
            <person name="Venter J.C."/>
        </authorList>
    </citation>
    <scope>NUCLEOTIDE SEQUENCE [LARGE SCALE GENOMIC DNA]</scope>
    <source>
        <strain>ATCC 43067 / DSM 2661 / JAL-1 / JCM 10045 / NBRC 100440</strain>
    </source>
</reference>